<evidence type="ECO:0000255" key="1">
    <source>
        <dbReference type="HAMAP-Rule" id="MF_00015"/>
    </source>
</evidence>
<proteinExistence type="inferred from homology"/>
<accession>A4XL42</accession>
<comment type="function">
    <text evidence="1">Represses a number of genes involved in the response to DNA damage (SOS response), including recA and lexA. In the presence of single-stranded DNA, RecA interacts with LexA causing an autocatalytic cleavage which disrupts the DNA-binding part of LexA, leading to derepression of the SOS regulon and eventually DNA repair.</text>
</comment>
<comment type="catalytic activity">
    <reaction evidence="1">
        <text>Hydrolysis of Ala-|-Gly bond in repressor LexA.</text>
        <dbReference type="EC" id="3.4.21.88"/>
    </reaction>
</comment>
<comment type="subunit">
    <text evidence="1">Homodimer.</text>
</comment>
<comment type="similarity">
    <text evidence="1">Belongs to the peptidase S24 family.</text>
</comment>
<feature type="chain" id="PRO_1000001276" description="LexA repressor">
    <location>
        <begin position="1"/>
        <end position="202"/>
    </location>
</feature>
<feature type="DNA-binding region" description="H-T-H motif" evidence="1">
    <location>
        <begin position="29"/>
        <end position="49"/>
    </location>
</feature>
<feature type="active site" description="For autocatalytic cleavage activity" evidence="1">
    <location>
        <position position="126"/>
    </location>
</feature>
<feature type="active site" description="For autocatalytic cleavage activity" evidence="1">
    <location>
        <position position="163"/>
    </location>
</feature>
<feature type="site" description="Cleavage; by autolysis" evidence="1">
    <location>
        <begin position="91"/>
        <end position="92"/>
    </location>
</feature>
<keyword id="KW-0068">Autocatalytic cleavage</keyword>
<keyword id="KW-0227">DNA damage</keyword>
<keyword id="KW-0234">DNA repair</keyword>
<keyword id="KW-0235">DNA replication</keyword>
<keyword id="KW-0238">DNA-binding</keyword>
<keyword id="KW-0378">Hydrolase</keyword>
<keyword id="KW-0678">Repressor</keyword>
<keyword id="KW-0742">SOS response</keyword>
<keyword id="KW-0804">Transcription</keyword>
<keyword id="KW-0805">Transcription regulation</keyword>
<protein>
    <recommendedName>
        <fullName evidence="1">LexA repressor</fullName>
        <ecNumber evidence="1">3.4.21.88</ecNumber>
    </recommendedName>
</protein>
<gene>
    <name evidence="1" type="primary">lexA</name>
    <name type="ordered locus">Csac_2042</name>
</gene>
<name>LEXA_CALS8</name>
<sequence length="202" mass="22940">MKKQLTKKQEEILEFIKKRIKEKGYPPAVREICEATGLKSTSTVHGHLTRLEKKGYIRRDPSKPRAIEIVDDDFYVHRNVIRLPLVGKVTAGEPILAVENIEDTITLPYDLVGTEDAFLLRVKGDSMIDAGIFDNDIIIVKRQNVAENGDIVVALIDDEATVKRFFKESDHIRLQPENKAMEPIIVKDVKILGKVIGLIRRM</sequence>
<organism>
    <name type="scientific">Caldicellulosiruptor saccharolyticus (strain ATCC 43494 / DSM 8903 / Tp8T 6331)</name>
    <dbReference type="NCBI Taxonomy" id="351627"/>
    <lineage>
        <taxon>Bacteria</taxon>
        <taxon>Bacillati</taxon>
        <taxon>Bacillota</taxon>
        <taxon>Bacillota incertae sedis</taxon>
        <taxon>Caldicellulosiruptorales</taxon>
        <taxon>Caldicellulosiruptoraceae</taxon>
        <taxon>Caldicellulosiruptor</taxon>
    </lineage>
</organism>
<dbReference type="EC" id="3.4.21.88" evidence="1"/>
<dbReference type="EMBL" id="CP000679">
    <property type="protein sequence ID" value="ABP67627.1"/>
    <property type="molecule type" value="Genomic_DNA"/>
</dbReference>
<dbReference type="RefSeq" id="WP_011917562.1">
    <property type="nucleotide sequence ID" value="NC_009437.1"/>
</dbReference>
<dbReference type="SMR" id="A4XL42"/>
<dbReference type="STRING" id="351627.Csac_2042"/>
<dbReference type="MEROPS" id="S24.001"/>
<dbReference type="KEGG" id="csc:Csac_2042"/>
<dbReference type="eggNOG" id="COG1974">
    <property type="taxonomic scope" value="Bacteria"/>
</dbReference>
<dbReference type="HOGENOM" id="CLU_066192_45_1_9"/>
<dbReference type="OrthoDB" id="9802364at2"/>
<dbReference type="Proteomes" id="UP000000256">
    <property type="component" value="Chromosome"/>
</dbReference>
<dbReference type="GO" id="GO:0003677">
    <property type="term" value="F:DNA binding"/>
    <property type="evidence" value="ECO:0007669"/>
    <property type="project" value="UniProtKB-UniRule"/>
</dbReference>
<dbReference type="GO" id="GO:0004252">
    <property type="term" value="F:serine-type endopeptidase activity"/>
    <property type="evidence" value="ECO:0007669"/>
    <property type="project" value="UniProtKB-UniRule"/>
</dbReference>
<dbReference type="GO" id="GO:0006281">
    <property type="term" value="P:DNA repair"/>
    <property type="evidence" value="ECO:0007669"/>
    <property type="project" value="UniProtKB-UniRule"/>
</dbReference>
<dbReference type="GO" id="GO:0006260">
    <property type="term" value="P:DNA replication"/>
    <property type="evidence" value="ECO:0007669"/>
    <property type="project" value="UniProtKB-UniRule"/>
</dbReference>
<dbReference type="GO" id="GO:0045892">
    <property type="term" value="P:negative regulation of DNA-templated transcription"/>
    <property type="evidence" value="ECO:0007669"/>
    <property type="project" value="UniProtKB-UniRule"/>
</dbReference>
<dbReference type="GO" id="GO:0006508">
    <property type="term" value="P:proteolysis"/>
    <property type="evidence" value="ECO:0007669"/>
    <property type="project" value="InterPro"/>
</dbReference>
<dbReference type="GO" id="GO:0009432">
    <property type="term" value="P:SOS response"/>
    <property type="evidence" value="ECO:0007669"/>
    <property type="project" value="UniProtKB-UniRule"/>
</dbReference>
<dbReference type="CDD" id="cd06529">
    <property type="entry name" value="S24_LexA-like"/>
    <property type="match status" value="1"/>
</dbReference>
<dbReference type="FunFam" id="1.10.10.10:FF:000009">
    <property type="entry name" value="LexA repressor"/>
    <property type="match status" value="1"/>
</dbReference>
<dbReference type="FunFam" id="2.10.109.10:FF:000001">
    <property type="entry name" value="LexA repressor"/>
    <property type="match status" value="1"/>
</dbReference>
<dbReference type="Gene3D" id="2.10.109.10">
    <property type="entry name" value="Umud Fragment, subunit A"/>
    <property type="match status" value="1"/>
</dbReference>
<dbReference type="Gene3D" id="1.10.10.10">
    <property type="entry name" value="Winged helix-like DNA-binding domain superfamily/Winged helix DNA-binding domain"/>
    <property type="match status" value="1"/>
</dbReference>
<dbReference type="HAMAP" id="MF_00015">
    <property type="entry name" value="LexA"/>
    <property type="match status" value="1"/>
</dbReference>
<dbReference type="InterPro" id="IPR006200">
    <property type="entry name" value="LexA"/>
</dbReference>
<dbReference type="InterPro" id="IPR039418">
    <property type="entry name" value="LexA-like"/>
</dbReference>
<dbReference type="InterPro" id="IPR036286">
    <property type="entry name" value="LexA/Signal_pep-like_sf"/>
</dbReference>
<dbReference type="InterPro" id="IPR006199">
    <property type="entry name" value="LexA_DNA-bd_dom"/>
</dbReference>
<dbReference type="InterPro" id="IPR050077">
    <property type="entry name" value="LexA_repressor"/>
</dbReference>
<dbReference type="InterPro" id="IPR006197">
    <property type="entry name" value="Peptidase_S24_LexA"/>
</dbReference>
<dbReference type="InterPro" id="IPR015927">
    <property type="entry name" value="Peptidase_S24_S26A/B/C"/>
</dbReference>
<dbReference type="InterPro" id="IPR036388">
    <property type="entry name" value="WH-like_DNA-bd_sf"/>
</dbReference>
<dbReference type="InterPro" id="IPR036390">
    <property type="entry name" value="WH_DNA-bd_sf"/>
</dbReference>
<dbReference type="NCBIfam" id="TIGR00498">
    <property type="entry name" value="lexA"/>
    <property type="match status" value="1"/>
</dbReference>
<dbReference type="PANTHER" id="PTHR33516">
    <property type="entry name" value="LEXA REPRESSOR"/>
    <property type="match status" value="1"/>
</dbReference>
<dbReference type="PANTHER" id="PTHR33516:SF2">
    <property type="entry name" value="LEXA REPRESSOR-RELATED"/>
    <property type="match status" value="1"/>
</dbReference>
<dbReference type="Pfam" id="PF01726">
    <property type="entry name" value="LexA_DNA_bind"/>
    <property type="match status" value="1"/>
</dbReference>
<dbReference type="Pfam" id="PF00717">
    <property type="entry name" value="Peptidase_S24"/>
    <property type="match status" value="1"/>
</dbReference>
<dbReference type="PRINTS" id="PR00726">
    <property type="entry name" value="LEXASERPTASE"/>
</dbReference>
<dbReference type="SUPFAM" id="SSF51306">
    <property type="entry name" value="LexA/Signal peptidase"/>
    <property type="match status" value="1"/>
</dbReference>
<dbReference type="SUPFAM" id="SSF46785">
    <property type="entry name" value="Winged helix' DNA-binding domain"/>
    <property type="match status" value="1"/>
</dbReference>
<reference key="1">
    <citation type="submission" date="2007-04" db="EMBL/GenBank/DDBJ databases">
        <title>Genome sequence of the thermophilic hydrogen-producing bacterium Caldicellulosiruptor saccharolyticus DSM 8903.</title>
        <authorList>
            <person name="Copeland A."/>
            <person name="Lucas S."/>
            <person name="Lapidus A."/>
            <person name="Barry K."/>
            <person name="Detter J.C."/>
            <person name="Glavina del Rio T."/>
            <person name="Hammon N."/>
            <person name="Israni S."/>
            <person name="Dalin E."/>
            <person name="Tice H."/>
            <person name="Pitluck S."/>
            <person name="Kiss H."/>
            <person name="Brettin T."/>
            <person name="Bruce D."/>
            <person name="Han C."/>
            <person name="Schmutz J."/>
            <person name="Larimer F."/>
            <person name="Land M."/>
            <person name="Hauser L."/>
            <person name="Kyrpides N."/>
            <person name="Lykidis A."/>
            <person name="van de Werken H.J.G."/>
            <person name="Verhaart M.R.A."/>
            <person name="VanFossen A.L."/>
            <person name="Lewis D.L."/>
            <person name="Nichols J.D."/>
            <person name="Goorissen H.P."/>
            <person name="van Niel E.W.J."/>
            <person name="Stams F.J.M."/>
            <person name="Willquist K.U."/>
            <person name="Ward D.E."/>
            <person name="van der Oost J."/>
            <person name="Kelly R.M."/>
            <person name="Kengen S.M.W."/>
            <person name="Richardson P."/>
        </authorList>
    </citation>
    <scope>NUCLEOTIDE SEQUENCE [LARGE SCALE GENOMIC DNA]</scope>
    <source>
        <strain>ATCC 43494 / DSM 8903 / Tp8T 6331</strain>
    </source>
</reference>